<accession>P35620</accession>
<comment type="function">
    <text>Involved in the export of flagellum proteins.</text>
</comment>
<comment type="interaction">
    <interactant intactId="EBI-15858509">
        <id>P35620</id>
    </interactant>
    <interactant intactId="EBI-15858572">
        <id>P20487</id>
        <label>fliJ</label>
    </interactant>
    <organismsDiffer>false</organismsDiffer>
    <experiments>3</experiments>
</comment>
<comment type="subcellular location">
    <subcellularLocation>
        <location evidence="2">Cell membrane</location>
        <topology evidence="2">Multi-pass membrane protein</topology>
    </subcellularLocation>
</comment>
<comment type="similarity">
    <text evidence="2">Belongs to the FHIPEP (flagella/HR/invasion proteins export pore) family.</text>
</comment>
<proteinExistence type="evidence at protein level"/>
<reference key="1">
    <citation type="journal article" date="1993" name="Mol. Microbiol.">
        <title>Bacillus subtilis FlhA: a flagellar protein related to a new family of signal-transducing receptors.</title>
        <authorList>
            <person name="Carpenter P.B."/>
            <person name="Ordal G.W."/>
        </authorList>
    </citation>
    <scope>NUCLEOTIDE SEQUENCE [GENOMIC DNA]</scope>
</reference>
<reference key="2">
    <citation type="journal article" date="1997" name="Nature">
        <title>The complete genome sequence of the Gram-positive bacterium Bacillus subtilis.</title>
        <authorList>
            <person name="Kunst F."/>
            <person name="Ogasawara N."/>
            <person name="Moszer I."/>
            <person name="Albertini A.M."/>
            <person name="Alloni G."/>
            <person name="Azevedo V."/>
            <person name="Bertero M.G."/>
            <person name="Bessieres P."/>
            <person name="Bolotin A."/>
            <person name="Borchert S."/>
            <person name="Borriss R."/>
            <person name="Boursier L."/>
            <person name="Brans A."/>
            <person name="Braun M."/>
            <person name="Brignell S.C."/>
            <person name="Bron S."/>
            <person name="Brouillet S."/>
            <person name="Bruschi C.V."/>
            <person name="Caldwell B."/>
            <person name="Capuano V."/>
            <person name="Carter N.M."/>
            <person name="Choi S.-K."/>
            <person name="Codani J.-J."/>
            <person name="Connerton I.F."/>
            <person name="Cummings N.J."/>
            <person name="Daniel R.A."/>
            <person name="Denizot F."/>
            <person name="Devine K.M."/>
            <person name="Duesterhoeft A."/>
            <person name="Ehrlich S.D."/>
            <person name="Emmerson P.T."/>
            <person name="Entian K.-D."/>
            <person name="Errington J."/>
            <person name="Fabret C."/>
            <person name="Ferrari E."/>
            <person name="Foulger D."/>
            <person name="Fritz C."/>
            <person name="Fujita M."/>
            <person name="Fujita Y."/>
            <person name="Fuma S."/>
            <person name="Galizzi A."/>
            <person name="Galleron N."/>
            <person name="Ghim S.-Y."/>
            <person name="Glaser P."/>
            <person name="Goffeau A."/>
            <person name="Golightly E.J."/>
            <person name="Grandi G."/>
            <person name="Guiseppi G."/>
            <person name="Guy B.J."/>
            <person name="Haga K."/>
            <person name="Haiech J."/>
            <person name="Harwood C.R."/>
            <person name="Henaut A."/>
            <person name="Hilbert H."/>
            <person name="Holsappel S."/>
            <person name="Hosono S."/>
            <person name="Hullo M.-F."/>
            <person name="Itaya M."/>
            <person name="Jones L.-M."/>
            <person name="Joris B."/>
            <person name="Karamata D."/>
            <person name="Kasahara Y."/>
            <person name="Klaerr-Blanchard M."/>
            <person name="Klein C."/>
            <person name="Kobayashi Y."/>
            <person name="Koetter P."/>
            <person name="Koningstein G."/>
            <person name="Krogh S."/>
            <person name="Kumano M."/>
            <person name="Kurita K."/>
            <person name="Lapidus A."/>
            <person name="Lardinois S."/>
            <person name="Lauber J."/>
            <person name="Lazarevic V."/>
            <person name="Lee S.-M."/>
            <person name="Levine A."/>
            <person name="Liu H."/>
            <person name="Masuda S."/>
            <person name="Mauel C."/>
            <person name="Medigue C."/>
            <person name="Medina N."/>
            <person name="Mellado R.P."/>
            <person name="Mizuno M."/>
            <person name="Moestl D."/>
            <person name="Nakai S."/>
            <person name="Noback M."/>
            <person name="Noone D."/>
            <person name="O'Reilly M."/>
            <person name="Ogawa K."/>
            <person name="Ogiwara A."/>
            <person name="Oudega B."/>
            <person name="Park S.-H."/>
            <person name="Parro V."/>
            <person name="Pohl T.M."/>
            <person name="Portetelle D."/>
            <person name="Porwollik S."/>
            <person name="Prescott A.M."/>
            <person name="Presecan E."/>
            <person name="Pujic P."/>
            <person name="Purnelle B."/>
            <person name="Rapoport G."/>
            <person name="Rey M."/>
            <person name="Reynolds S."/>
            <person name="Rieger M."/>
            <person name="Rivolta C."/>
            <person name="Rocha E."/>
            <person name="Roche B."/>
            <person name="Rose M."/>
            <person name="Sadaie Y."/>
            <person name="Sato T."/>
            <person name="Scanlan E."/>
            <person name="Schleich S."/>
            <person name="Schroeter R."/>
            <person name="Scoffone F."/>
            <person name="Sekiguchi J."/>
            <person name="Sekowska A."/>
            <person name="Seror S.J."/>
            <person name="Serror P."/>
            <person name="Shin B.-S."/>
            <person name="Soldo B."/>
            <person name="Sorokin A."/>
            <person name="Tacconi E."/>
            <person name="Takagi T."/>
            <person name="Takahashi H."/>
            <person name="Takemaru K."/>
            <person name="Takeuchi M."/>
            <person name="Tamakoshi A."/>
            <person name="Tanaka T."/>
            <person name="Terpstra P."/>
            <person name="Tognoni A."/>
            <person name="Tosato V."/>
            <person name="Uchiyama S."/>
            <person name="Vandenbol M."/>
            <person name="Vannier F."/>
            <person name="Vassarotti A."/>
            <person name="Viari A."/>
            <person name="Wambutt R."/>
            <person name="Wedler E."/>
            <person name="Wedler H."/>
            <person name="Weitzenegger T."/>
            <person name="Winters P."/>
            <person name="Wipat A."/>
            <person name="Yamamoto H."/>
            <person name="Yamane K."/>
            <person name="Yasumoto K."/>
            <person name="Yata K."/>
            <person name="Yoshida K."/>
            <person name="Yoshikawa H.-F."/>
            <person name="Zumstein E."/>
            <person name="Yoshikawa H."/>
            <person name="Danchin A."/>
        </authorList>
    </citation>
    <scope>NUCLEOTIDE SEQUENCE [LARGE SCALE GENOMIC DNA]</scope>
    <source>
        <strain>168</strain>
    </source>
</reference>
<reference key="3">
    <citation type="journal article" date="2009" name="Microbiology">
        <title>From a consortium sequence to a unified sequence: the Bacillus subtilis 168 reference genome a decade later.</title>
        <authorList>
            <person name="Barbe V."/>
            <person name="Cruveiller S."/>
            <person name="Kunst F."/>
            <person name="Lenoble P."/>
            <person name="Meurice G."/>
            <person name="Sekowska A."/>
            <person name="Vallenet D."/>
            <person name="Wang T."/>
            <person name="Moszer I."/>
            <person name="Medigue C."/>
            <person name="Danchin A."/>
        </authorList>
    </citation>
    <scope>SEQUENCE REVISION TO 18-19</scope>
</reference>
<protein>
    <recommendedName>
        <fullName>Flagellar biosynthesis protein FlhA</fullName>
    </recommendedName>
</protein>
<dbReference type="EMBL" id="X63698">
    <property type="protein sequence ID" value="CAA45225.1"/>
    <property type="molecule type" value="Genomic_DNA"/>
</dbReference>
<dbReference type="EMBL" id="AL009126">
    <property type="protein sequence ID" value="CAB13512.2"/>
    <property type="molecule type" value="Genomic_DNA"/>
</dbReference>
<dbReference type="PIR" id="S33664">
    <property type="entry name" value="S33664"/>
</dbReference>
<dbReference type="RefSeq" id="NP_389521.2">
    <property type="nucleotide sequence ID" value="NC_000964.3"/>
</dbReference>
<dbReference type="RefSeq" id="WP_003231947.1">
    <property type="nucleotide sequence ID" value="NZ_OZ025638.1"/>
</dbReference>
<dbReference type="PDB" id="3MIX">
    <property type="method" value="X-ray"/>
    <property type="resolution" value="2.30 A"/>
    <property type="chains" value="A=303-677"/>
</dbReference>
<dbReference type="PDBsum" id="3MIX"/>
<dbReference type="SMR" id="P35620"/>
<dbReference type="DIP" id="DIP-59539N"/>
<dbReference type="FunCoup" id="P35620">
    <property type="interactions" value="164"/>
</dbReference>
<dbReference type="IntAct" id="P35620">
    <property type="interactions" value="5"/>
</dbReference>
<dbReference type="STRING" id="224308.BSU16390"/>
<dbReference type="PaxDb" id="224308-BSU16390"/>
<dbReference type="EnsemblBacteria" id="CAB13512">
    <property type="protein sequence ID" value="CAB13512"/>
    <property type="gene ID" value="BSU_16390"/>
</dbReference>
<dbReference type="GeneID" id="940029"/>
<dbReference type="KEGG" id="bsu:BSU16390"/>
<dbReference type="PATRIC" id="fig|224308.179.peg.1780"/>
<dbReference type="eggNOG" id="COG1298">
    <property type="taxonomic scope" value="Bacteria"/>
</dbReference>
<dbReference type="InParanoid" id="P35620"/>
<dbReference type="OrthoDB" id="9759185at2"/>
<dbReference type="PhylomeDB" id="P35620"/>
<dbReference type="BioCyc" id="BSUB:BSU16390-MONOMER"/>
<dbReference type="EvolutionaryTrace" id="P35620"/>
<dbReference type="Proteomes" id="UP000001570">
    <property type="component" value="Chromosome"/>
</dbReference>
<dbReference type="GO" id="GO:0005886">
    <property type="term" value="C:plasma membrane"/>
    <property type="evidence" value="ECO:0000318"/>
    <property type="project" value="GO_Central"/>
</dbReference>
<dbReference type="GO" id="GO:0044780">
    <property type="term" value="P:bacterial-type flagellum assembly"/>
    <property type="evidence" value="ECO:0000315"/>
    <property type="project" value="CACAO"/>
</dbReference>
<dbReference type="GO" id="GO:0071978">
    <property type="term" value="P:bacterial-type flagellum-dependent swarming motility"/>
    <property type="evidence" value="ECO:0000315"/>
    <property type="project" value="CACAO"/>
</dbReference>
<dbReference type="GO" id="GO:0009306">
    <property type="term" value="P:protein secretion"/>
    <property type="evidence" value="ECO:0007669"/>
    <property type="project" value="InterPro"/>
</dbReference>
<dbReference type="Gene3D" id="3.40.30.60">
    <property type="entry name" value="FHIPEP family, domain 1"/>
    <property type="match status" value="1"/>
</dbReference>
<dbReference type="Gene3D" id="1.10.8.540">
    <property type="entry name" value="FHIPEP family, domain 3"/>
    <property type="match status" value="1"/>
</dbReference>
<dbReference type="Gene3D" id="3.40.50.12790">
    <property type="entry name" value="FHIPEP family, domain 4"/>
    <property type="match status" value="1"/>
</dbReference>
<dbReference type="InterPro" id="IPR042194">
    <property type="entry name" value="FHIPEP_1"/>
</dbReference>
<dbReference type="InterPro" id="IPR042193">
    <property type="entry name" value="FHIPEP_3"/>
</dbReference>
<dbReference type="InterPro" id="IPR042196">
    <property type="entry name" value="FHIPEP_4"/>
</dbReference>
<dbReference type="InterPro" id="IPR025505">
    <property type="entry name" value="FHIPEP_CS"/>
</dbReference>
<dbReference type="InterPro" id="IPR006301">
    <property type="entry name" value="FlhA"/>
</dbReference>
<dbReference type="InterPro" id="IPR001712">
    <property type="entry name" value="T3SS_FHIPEP"/>
</dbReference>
<dbReference type="NCBIfam" id="TIGR01398">
    <property type="entry name" value="FlhA"/>
    <property type="match status" value="1"/>
</dbReference>
<dbReference type="PANTHER" id="PTHR30161:SF1">
    <property type="entry name" value="FLAGELLAR BIOSYNTHESIS PROTEIN FLHA-RELATED"/>
    <property type="match status" value="1"/>
</dbReference>
<dbReference type="PANTHER" id="PTHR30161">
    <property type="entry name" value="FLAGELLAR EXPORT PROTEIN, MEMBRANE FLHA SUBUNIT-RELATED"/>
    <property type="match status" value="1"/>
</dbReference>
<dbReference type="Pfam" id="PF00771">
    <property type="entry name" value="FHIPEP"/>
    <property type="match status" value="1"/>
</dbReference>
<dbReference type="PIRSF" id="PIRSF005419">
    <property type="entry name" value="FlhA"/>
    <property type="match status" value="1"/>
</dbReference>
<dbReference type="PRINTS" id="PR00949">
    <property type="entry name" value="TYPE3IMAPROT"/>
</dbReference>
<dbReference type="PROSITE" id="PS00994">
    <property type="entry name" value="FHIPEP"/>
    <property type="match status" value="1"/>
</dbReference>
<feature type="chain" id="PRO_0000190010" description="Flagellar biosynthesis protein FlhA">
    <location>
        <begin position="1"/>
        <end position="677"/>
    </location>
</feature>
<feature type="transmembrane region" description="Helical" evidence="1">
    <location>
        <begin position="6"/>
        <end position="22"/>
    </location>
</feature>
<feature type="transmembrane region" description="Helical" evidence="1">
    <location>
        <begin position="27"/>
        <end position="43"/>
    </location>
</feature>
<feature type="transmembrane region" description="Helical" evidence="1">
    <location>
        <begin position="52"/>
        <end position="68"/>
    </location>
</feature>
<feature type="transmembrane region" description="Helical" evidence="1">
    <location>
        <begin position="104"/>
        <end position="120"/>
    </location>
</feature>
<feature type="transmembrane region" description="Helical" evidence="1">
    <location>
        <begin position="189"/>
        <end position="205"/>
    </location>
</feature>
<feature type="transmembrane region" description="Helical" evidence="1">
    <location>
        <begin position="230"/>
        <end position="246"/>
    </location>
</feature>
<feature type="transmembrane region" description="Helical" evidence="1">
    <location>
        <begin position="275"/>
        <end position="291"/>
    </location>
</feature>
<feature type="sequence conflict" description="In Ref. 1; CAA45225." evidence="2" ref="1">
    <original>ML</original>
    <variation>IV</variation>
    <location>
        <begin position="18"/>
        <end position="19"/>
    </location>
</feature>
<feature type="helix" evidence="3">
    <location>
        <begin position="319"/>
        <end position="326"/>
    </location>
</feature>
<feature type="helix" evidence="3">
    <location>
        <begin position="332"/>
        <end position="335"/>
    </location>
</feature>
<feature type="helix" evidence="3">
    <location>
        <begin position="336"/>
        <end position="338"/>
    </location>
</feature>
<feature type="strand" evidence="3">
    <location>
        <begin position="343"/>
        <end position="348"/>
    </location>
</feature>
<feature type="helix" evidence="3">
    <location>
        <begin position="350"/>
        <end position="352"/>
    </location>
</feature>
<feature type="helix" evidence="3">
    <location>
        <begin position="353"/>
        <end position="357"/>
    </location>
</feature>
<feature type="strand" evidence="3">
    <location>
        <begin position="358"/>
        <end position="360"/>
    </location>
</feature>
<feature type="helix" evidence="3">
    <location>
        <begin position="364"/>
        <end position="379"/>
    </location>
</feature>
<feature type="strand" evidence="3">
    <location>
        <begin position="387"/>
        <end position="390"/>
    </location>
</feature>
<feature type="strand" evidence="3">
    <location>
        <begin position="398"/>
        <end position="403"/>
    </location>
</feature>
<feature type="strand" evidence="3">
    <location>
        <begin position="406"/>
        <end position="412"/>
    </location>
</feature>
<feature type="helix" evidence="3">
    <location>
        <begin position="465"/>
        <end position="484"/>
    </location>
</feature>
<feature type="helix" evidence="3">
    <location>
        <begin position="487"/>
        <end position="500"/>
    </location>
</feature>
<feature type="helix" evidence="3">
    <location>
        <begin position="502"/>
        <end position="508"/>
    </location>
</feature>
<feature type="turn" evidence="3">
    <location>
        <begin position="509"/>
        <end position="512"/>
    </location>
</feature>
<feature type="helix" evidence="3">
    <location>
        <begin position="515"/>
        <end position="527"/>
    </location>
</feature>
<feature type="helix" evidence="3">
    <location>
        <begin position="535"/>
        <end position="545"/>
    </location>
</feature>
<feature type="turn" evidence="3">
    <location>
        <begin position="546"/>
        <end position="548"/>
    </location>
</feature>
<feature type="helix" evidence="3">
    <location>
        <begin position="552"/>
        <end position="562"/>
    </location>
</feature>
<feature type="helix" evidence="3">
    <location>
        <begin position="564"/>
        <end position="571"/>
    </location>
</feature>
<feature type="strand" evidence="3">
    <location>
        <begin position="581"/>
        <end position="583"/>
    </location>
</feature>
<feature type="helix" evidence="3">
    <location>
        <begin position="585"/>
        <end position="594"/>
    </location>
</feature>
<feature type="helix" evidence="3">
    <location>
        <begin position="608"/>
        <end position="627"/>
    </location>
</feature>
<feature type="strand" evidence="3">
    <location>
        <begin position="634"/>
        <end position="636"/>
    </location>
</feature>
<feature type="helix" evidence="3">
    <location>
        <begin position="638"/>
        <end position="648"/>
    </location>
</feature>
<feature type="turn" evidence="3">
    <location>
        <begin position="649"/>
        <end position="651"/>
    </location>
</feature>
<feature type="strand" evidence="3">
    <location>
        <begin position="657"/>
        <end position="659"/>
    </location>
</feature>
<feature type="helix" evidence="3">
    <location>
        <begin position="660"/>
        <end position="662"/>
    </location>
</feature>
<gene>
    <name type="primary">flhA</name>
    <name type="ordered locus">BSU16390</name>
</gene>
<keyword id="KW-0002">3D-structure</keyword>
<keyword id="KW-1005">Bacterial flagellum biogenesis</keyword>
<keyword id="KW-1006">Bacterial flagellum protein export</keyword>
<keyword id="KW-1003">Cell membrane</keyword>
<keyword id="KW-0472">Membrane</keyword>
<keyword id="KW-0653">Protein transport</keyword>
<keyword id="KW-1185">Reference proteome</keyword>
<keyword id="KW-0812">Transmembrane</keyword>
<keyword id="KW-1133">Transmembrane helix</keyword>
<keyword id="KW-0813">Transport</keyword>
<evidence type="ECO:0000255" key="1"/>
<evidence type="ECO:0000305" key="2"/>
<evidence type="ECO:0007829" key="3">
    <source>
        <dbReference type="PDB" id="3MIX"/>
    </source>
</evidence>
<organism>
    <name type="scientific">Bacillus subtilis (strain 168)</name>
    <dbReference type="NCBI Taxonomy" id="224308"/>
    <lineage>
        <taxon>Bacteria</taxon>
        <taxon>Bacillati</taxon>
        <taxon>Bacillota</taxon>
        <taxon>Bacilli</taxon>
        <taxon>Bacillales</taxon>
        <taxon>Bacillaceae</taxon>
        <taxon>Bacillus</taxon>
    </lineage>
</organism>
<name>FLHA_BACSU</name>
<sequence length="677" mass="73977">MSTRDLSVLISVVLIVAMLVIPFPPWLLSILIIINISLALIVLLTTMNMQEALQFSIFPSLLLLLTLFRLGLNVSTTRSILSHGEGGKVVETFGNFVVGGNVLVGLVVFIILIIIQFIVITKGAERVSEVAARFTLDAMPGKQMSIDADLNAGMITEQEAKHRREKVAREADFYGAMDGASKFVKGDAIAGIIIVMINIIFGIVIGMLQQGMSIQEAASHFTMLTVGDGIVSQIPALLISTATGIVVTRAASEGNLGHDITGQLFAYPKLLYVAAATIMLLGIFTPIGILLTGPLAGLLAFGAYTLSKSGKEKEEVDEILEEEAEVDELKSPESVVQLLHIDPIEFEFGYGLIPLADANQGGDLLDRIVMIRRQLALELGLVIPVVRIRDNIALQPNEYRLKIKGNEVAKGELLLDHYLAMSPTPEDDLIEGIETVEPSFGLPAKWISEAVKDEADMLGYTVVDPASVVSTHITEKIKQHAHELIGRQETKQLIDHLKESYPVLVEEVTPNPLSVGDIQKVLAKLLKEKVSIRNLVTIFETLADYGKLTTDSDLLTEYTRQALAKQITAQFAKENEVLKVVTCSGRVEKAIADGVQQTEHGNYLSLEPDISESIVRSVAKEAEQLSLRQETAILLCSPPVRMYVKQLLERYFPDLPVLSYNELEANVEVQSIGVVDI</sequence>